<proteinExistence type="inferred from homology"/>
<keyword id="KW-0235">DNA replication</keyword>
<keyword id="KW-0238">DNA-binding</keyword>
<keyword id="KW-0639">Primosome</keyword>
<accession>B7LXS5</accession>
<gene>
    <name evidence="1" type="primary">dnaT</name>
    <name type="ordered locus">ECIAI1_4584</name>
</gene>
<protein>
    <recommendedName>
        <fullName evidence="1">Replication restart protein DnaT</fullName>
    </recommendedName>
</protein>
<name>DNAT_ECO8A</name>
<feature type="chain" id="PRO_1000136432" description="Replication restart protein DnaT">
    <location>
        <begin position="1"/>
        <end position="179"/>
    </location>
</feature>
<feature type="region of interest" description="Disordered" evidence="2">
    <location>
        <begin position="155"/>
        <end position="179"/>
    </location>
</feature>
<dbReference type="EMBL" id="CU928160">
    <property type="protein sequence ID" value="CAR01325.1"/>
    <property type="molecule type" value="Genomic_DNA"/>
</dbReference>
<dbReference type="RefSeq" id="WP_000098819.1">
    <property type="nucleotide sequence ID" value="NC_011741.1"/>
</dbReference>
<dbReference type="SMR" id="B7LXS5"/>
<dbReference type="KEGG" id="ecr:ECIAI1_4584"/>
<dbReference type="HOGENOM" id="CLU_1501592_0_0_6"/>
<dbReference type="GO" id="GO:1990077">
    <property type="term" value="C:primosome complex"/>
    <property type="evidence" value="ECO:0007669"/>
    <property type="project" value="UniProtKB-KW"/>
</dbReference>
<dbReference type="GO" id="GO:0006269">
    <property type="term" value="P:DNA replication, synthesis of primer"/>
    <property type="evidence" value="ECO:0007669"/>
    <property type="project" value="UniProtKB-UniRule"/>
</dbReference>
<dbReference type="Gene3D" id="1.10.8.1180">
    <property type="match status" value="1"/>
</dbReference>
<dbReference type="HAMAP" id="MF_01061">
    <property type="entry name" value="DnaT"/>
    <property type="match status" value="1"/>
</dbReference>
<dbReference type="InterPro" id="IPR020917">
    <property type="entry name" value="DnaT"/>
</dbReference>
<dbReference type="InterPro" id="IPR040480">
    <property type="entry name" value="DnaT_DNA_bind"/>
</dbReference>
<dbReference type="NCBIfam" id="NF002770">
    <property type="entry name" value="PRK02854.1"/>
    <property type="match status" value="1"/>
</dbReference>
<dbReference type="Pfam" id="PF17948">
    <property type="entry name" value="DnaT"/>
    <property type="match status" value="1"/>
</dbReference>
<evidence type="ECO:0000255" key="1">
    <source>
        <dbReference type="HAMAP-Rule" id="MF_01061"/>
    </source>
</evidence>
<evidence type="ECO:0000256" key="2">
    <source>
        <dbReference type="SAM" id="MobiDB-lite"/>
    </source>
</evidence>
<reference key="1">
    <citation type="journal article" date="2009" name="PLoS Genet.">
        <title>Organised genome dynamics in the Escherichia coli species results in highly diverse adaptive paths.</title>
        <authorList>
            <person name="Touchon M."/>
            <person name="Hoede C."/>
            <person name="Tenaillon O."/>
            <person name="Barbe V."/>
            <person name="Baeriswyl S."/>
            <person name="Bidet P."/>
            <person name="Bingen E."/>
            <person name="Bonacorsi S."/>
            <person name="Bouchier C."/>
            <person name="Bouvet O."/>
            <person name="Calteau A."/>
            <person name="Chiapello H."/>
            <person name="Clermont O."/>
            <person name="Cruveiller S."/>
            <person name="Danchin A."/>
            <person name="Diard M."/>
            <person name="Dossat C."/>
            <person name="Karoui M.E."/>
            <person name="Frapy E."/>
            <person name="Garry L."/>
            <person name="Ghigo J.M."/>
            <person name="Gilles A.M."/>
            <person name="Johnson J."/>
            <person name="Le Bouguenec C."/>
            <person name="Lescat M."/>
            <person name="Mangenot S."/>
            <person name="Martinez-Jehanne V."/>
            <person name="Matic I."/>
            <person name="Nassif X."/>
            <person name="Oztas S."/>
            <person name="Petit M.A."/>
            <person name="Pichon C."/>
            <person name="Rouy Z."/>
            <person name="Ruf C.S."/>
            <person name="Schneider D."/>
            <person name="Tourret J."/>
            <person name="Vacherie B."/>
            <person name="Vallenet D."/>
            <person name="Medigue C."/>
            <person name="Rocha E.P.C."/>
            <person name="Denamur E."/>
        </authorList>
    </citation>
    <scope>NUCLEOTIDE SEQUENCE [LARGE SCALE GENOMIC DNA]</scope>
    <source>
        <strain>IAI1</strain>
    </source>
</reference>
<organism>
    <name type="scientific">Escherichia coli O8 (strain IAI1)</name>
    <dbReference type="NCBI Taxonomy" id="585034"/>
    <lineage>
        <taxon>Bacteria</taxon>
        <taxon>Pseudomonadati</taxon>
        <taxon>Pseudomonadota</taxon>
        <taxon>Gammaproteobacteria</taxon>
        <taxon>Enterobacterales</taxon>
        <taxon>Enterobacteriaceae</taxon>
        <taxon>Escherichia</taxon>
    </lineage>
</organism>
<sequence length="179" mass="19485">MSSRVLTPDVVGIDALVHDHQTVLAKAEGGVVAVFANNAPAFYAVTPARLAELLALEEKLARPGSDVALDDQLYQEPQAAPVAVPMGKFAMYPDWQPDADFIRLAALWGVALREPVTTEELTSFIAYWQAEGKVFHHVQWQQKLARSLQIGRASNGGLPKRDVNTVSEPDSQIPPGFRG</sequence>
<comment type="function">
    <text evidence="1">Involved in the restart of stalled replication forks, which reloads the replicative helicase on sites other than the origin of replication. Can function in multiple replication restart pathways. Displaces ssDNA from a PriB-ssDNA complex. Probably forms a spiral filament on ssDNA.</text>
</comment>
<comment type="subunit">
    <text evidence="1">Homooligomerizes. Interacts with PriB. Component of the replication restart primosome. Primosome assembly occurs via a 'hand-off' mechanism. PriA binds to replication forks, subsequently PriB then DnaT bind; DnaT then displaces ssDNA to generate the helicase loading substrate.</text>
</comment>
<comment type="similarity">
    <text evidence="1">Belongs to the DnaT family.</text>
</comment>